<comment type="catalytic activity">
    <reaction evidence="2">
        <text>GTP + H2O = 7,8-dihydroneopterin 3'-triphosphate + formate + H(+)</text>
        <dbReference type="Rhea" id="RHEA:17473"/>
        <dbReference type="ChEBI" id="CHEBI:15377"/>
        <dbReference type="ChEBI" id="CHEBI:15378"/>
        <dbReference type="ChEBI" id="CHEBI:15740"/>
        <dbReference type="ChEBI" id="CHEBI:37565"/>
        <dbReference type="ChEBI" id="CHEBI:58462"/>
        <dbReference type="EC" id="3.5.4.16"/>
    </reaction>
</comment>
<comment type="pathway">
    <text evidence="2">Cofactor biosynthesis; 7,8-dihydroneopterin triphosphate biosynthesis; 7,8-dihydroneopterin triphosphate from GTP: step 1/1.</text>
</comment>
<comment type="subunit">
    <text evidence="1">Toroid-shaped homodecamer, composed of two pentamers of five dimers.</text>
</comment>
<comment type="similarity">
    <text evidence="2">Belongs to the GTP cyclohydrolase I family.</text>
</comment>
<proteinExistence type="inferred from homology"/>
<organism>
    <name type="scientific">Brucella abortus (strain 2308)</name>
    <dbReference type="NCBI Taxonomy" id="359391"/>
    <lineage>
        <taxon>Bacteria</taxon>
        <taxon>Pseudomonadati</taxon>
        <taxon>Pseudomonadota</taxon>
        <taxon>Alphaproteobacteria</taxon>
        <taxon>Hyphomicrobiales</taxon>
        <taxon>Brucellaceae</taxon>
        <taxon>Brucella/Ochrobactrum group</taxon>
        <taxon>Brucella</taxon>
    </lineage>
</organism>
<evidence type="ECO:0000250" key="1"/>
<evidence type="ECO:0000255" key="2">
    <source>
        <dbReference type="HAMAP-Rule" id="MF_00223"/>
    </source>
</evidence>
<gene>
    <name evidence="2" type="primary">folE</name>
    <name type="ordered locus">BAB1_1097</name>
</gene>
<sequence>MDARILQDNDDTSLPVNQASVTRIHKKPGKAEAEAAVRTLLLWAGEDPDREGLLETPKRVAKAYQELFGGYSESPEEVLGTTFEEVAGYDDMVLVKDISFFSHCEHHMVPIIGKAHVAYLPEGRVVGLSKIARVVDIFARRLQTQESITAQIADSIQRILKPRGVAVMIEAEHMCMAMRSIRKQGSSTITTTFTGDFKEKADQQVRFMTLIRT</sequence>
<dbReference type="EC" id="3.5.4.16" evidence="2"/>
<dbReference type="EMBL" id="AM040264">
    <property type="protein sequence ID" value="CAJ11053.1"/>
    <property type="molecule type" value="Genomic_DNA"/>
</dbReference>
<dbReference type="RefSeq" id="WP_002964194.1">
    <property type="nucleotide sequence ID" value="NZ_KN046823.1"/>
</dbReference>
<dbReference type="SMR" id="Q2YQ03"/>
<dbReference type="STRING" id="359391.BAB1_1097"/>
<dbReference type="GeneID" id="93016580"/>
<dbReference type="KEGG" id="bmf:BAB1_1097"/>
<dbReference type="PATRIC" id="fig|359391.11.peg.1809"/>
<dbReference type="HOGENOM" id="CLU_049768_3_1_5"/>
<dbReference type="PhylomeDB" id="Q2YQ03"/>
<dbReference type="UniPathway" id="UPA00848">
    <property type="reaction ID" value="UER00151"/>
</dbReference>
<dbReference type="Proteomes" id="UP000002719">
    <property type="component" value="Chromosome I"/>
</dbReference>
<dbReference type="GO" id="GO:0005737">
    <property type="term" value="C:cytoplasm"/>
    <property type="evidence" value="ECO:0007669"/>
    <property type="project" value="TreeGrafter"/>
</dbReference>
<dbReference type="GO" id="GO:0005525">
    <property type="term" value="F:GTP binding"/>
    <property type="evidence" value="ECO:0007669"/>
    <property type="project" value="UniProtKB-KW"/>
</dbReference>
<dbReference type="GO" id="GO:0003934">
    <property type="term" value="F:GTP cyclohydrolase I activity"/>
    <property type="evidence" value="ECO:0007669"/>
    <property type="project" value="UniProtKB-UniRule"/>
</dbReference>
<dbReference type="GO" id="GO:0008270">
    <property type="term" value="F:zinc ion binding"/>
    <property type="evidence" value="ECO:0007669"/>
    <property type="project" value="UniProtKB-UniRule"/>
</dbReference>
<dbReference type="GO" id="GO:0006730">
    <property type="term" value="P:one-carbon metabolic process"/>
    <property type="evidence" value="ECO:0007669"/>
    <property type="project" value="UniProtKB-UniRule"/>
</dbReference>
<dbReference type="GO" id="GO:0006729">
    <property type="term" value="P:tetrahydrobiopterin biosynthetic process"/>
    <property type="evidence" value="ECO:0007669"/>
    <property type="project" value="TreeGrafter"/>
</dbReference>
<dbReference type="GO" id="GO:0046654">
    <property type="term" value="P:tetrahydrofolate biosynthetic process"/>
    <property type="evidence" value="ECO:0007669"/>
    <property type="project" value="UniProtKB-UniRule"/>
</dbReference>
<dbReference type="FunFam" id="1.10.286.10:FF:000001">
    <property type="entry name" value="GTP cyclohydrolase 1"/>
    <property type="match status" value="1"/>
</dbReference>
<dbReference type="FunFam" id="3.30.1130.10:FF:000001">
    <property type="entry name" value="GTP cyclohydrolase 1"/>
    <property type="match status" value="1"/>
</dbReference>
<dbReference type="Gene3D" id="1.10.286.10">
    <property type="match status" value="1"/>
</dbReference>
<dbReference type="Gene3D" id="3.30.1130.10">
    <property type="match status" value="1"/>
</dbReference>
<dbReference type="HAMAP" id="MF_00223">
    <property type="entry name" value="FolE"/>
    <property type="match status" value="1"/>
</dbReference>
<dbReference type="InterPro" id="IPR043133">
    <property type="entry name" value="GTP-CH-I_C/QueF"/>
</dbReference>
<dbReference type="InterPro" id="IPR043134">
    <property type="entry name" value="GTP-CH-I_N"/>
</dbReference>
<dbReference type="InterPro" id="IPR001474">
    <property type="entry name" value="GTP_CycHdrlase_I"/>
</dbReference>
<dbReference type="InterPro" id="IPR018234">
    <property type="entry name" value="GTP_CycHdrlase_I_CS"/>
</dbReference>
<dbReference type="InterPro" id="IPR020602">
    <property type="entry name" value="GTP_CycHdrlase_I_dom"/>
</dbReference>
<dbReference type="NCBIfam" id="TIGR00063">
    <property type="entry name" value="folE"/>
    <property type="match status" value="1"/>
</dbReference>
<dbReference type="NCBIfam" id="NF006825">
    <property type="entry name" value="PRK09347.1-2"/>
    <property type="match status" value="1"/>
</dbReference>
<dbReference type="NCBIfam" id="NF006826">
    <property type="entry name" value="PRK09347.1-3"/>
    <property type="match status" value="1"/>
</dbReference>
<dbReference type="PANTHER" id="PTHR11109:SF7">
    <property type="entry name" value="GTP CYCLOHYDROLASE 1"/>
    <property type="match status" value="1"/>
</dbReference>
<dbReference type="PANTHER" id="PTHR11109">
    <property type="entry name" value="GTP CYCLOHYDROLASE I"/>
    <property type="match status" value="1"/>
</dbReference>
<dbReference type="Pfam" id="PF01227">
    <property type="entry name" value="GTP_cyclohydroI"/>
    <property type="match status" value="1"/>
</dbReference>
<dbReference type="SUPFAM" id="SSF55620">
    <property type="entry name" value="Tetrahydrobiopterin biosynthesis enzymes-like"/>
    <property type="match status" value="1"/>
</dbReference>
<dbReference type="PROSITE" id="PS00859">
    <property type="entry name" value="GTP_CYCLOHYDROL_1_1"/>
    <property type="match status" value="1"/>
</dbReference>
<feature type="chain" id="PRO_1000043669" description="GTP cyclohydrolase 1">
    <location>
        <begin position="1"/>
        <end position="213"/>
    </location>
</feature>
<feature type="binding site" evidence="2">
    <location>
        <position position="104"/>
    </location>
    <ligand>
        <name>Zn(2+)</name>
        <dbReference type="ChEBI" id="CHEBI:29105"/>
    </ligand>
</feature>
<feature type="binding site" evidence="2">
    <location>
        <position position="107"/>
    </location>
    <ligand>
        <name>Zn(2+)</name>
        <dbReference type="ChEBI" id="CHEBI:29105"/>
    </ligand>
</feature>
<feature type="binding site" evidence="2">
    <location>
        <position position="175"/>
    </location>
    <ligand>
        <name>Zn(2+)</name>
        <dbReference type="ChEBI" id="CHEBI:29105"/>
    </ligand>
</feature>
<accession>Q2YQ03</accession>
<reference key="1">
    <citation type="journal article" date="2005" name="Infect. Immun.">
        <title>Whole-genome analyses of speciation events in pathogenic Brucellae.</title>
        <authorList>
            <person name="Chain P.S."/>
            <person name="Comerci D.J."/>
            <person name="Tolmasky M.E."/>
            <person name="Larimer F.W."/>
            <person name="Malfatti S.A."/>
            <person name="Vergez L.M."/>
            <person name="Aguero F."/>
            <person name="Land M.L."/>
            <person name="Ugalde R.A."/>
            <person name="Garcia E."/>
        </authorList>
    </citation>
    <scope>NUCLEOTIDE SEQUENCE [LARGE SCALE GENOMIC DNA]</scope>
    <source>
        <strain>2308</strain>
    </source>
</reference>
<keyword id="KW-0342">GTP-binding</keyword>
<keyword id="KW-0378">Hydrolase</keyword>
<keyword id="KW-0479">Metal-binding</keyword>
<keyword id="KW-0547">Nucleotide-binding</keyword>
<keyword id="KW-0554">One-carbon metabolism</keyword>
<keyword id="KW-1185">Reference proteome</keyword>
<keyword id="KW-0862">Zinc</keyword>
<name>GCH1_BRUA2</name>
<protein>
    <recommendedName>
        <fullName evidence="2">GTP cyclohydrolase 1</fullName>
        <ecNumber evidence="2">3.5.4.16</ecNumber>
    </recommendedName>
    <alternativeName>
        <fullName evidence="2">GTP cyclohydrolase I</fullName>
        <shortName evidence="2">GTP-CH-I</shortName>
    </alternativeName>
</protein>